<comment type="function">
    <text evidence="2">Component of the ubiquinol-cytochrome c reductase complex (complex III or cytochrome b-c1 complex) that is part of the mitochondrial respiratory chain. The b-c1 complex mediates electron transfer from ubiquinol to cytochrome c. Contributes to the generation of a proton gradient across the mitochondrial membrane that is then used for ATP synthesis.</text>
</comment>
<comment type="cofactor">
    <cofactor evidence="2">
        <name>heme b</name>
        <dbReference type="ChEBI" id="CHEBI:60344"/>
    </cofactor>
    <text evidence="2">Binds 2 heme b groups non-covalently.</text>
</comment>
<comment type="subunit">
    <text evidence="2">The cytochrome bc1 complex contains 11 subunits: 3 respiratory subunits (MT-CYB, CYC1 and UQCRFS1), 2 core proteins (UQCRC1 and UQCRC2) and 6 low-molecular weight proteins (UQCRH/QCR6, UQCRB/QCR7, UQCRQ/QCR8, UQCR10/QCR9, UQCR11/QCR10 and a cleavage product of UQCRFS1). This cytochrome bc1 complex then forms a dimer.</text>
</comment>
<comment type="subcellular location">
    <subcellularLocation>
        <location evidence="2">Mitochondrion inner membrane</location>
        <topology evidence="2">Multi-pass membrane protein</topology>
    </subcellularLocation>
</comment>
<comment type="miscellaneous">
    <text evidence="1">Heme 1 (or BL or b562) is low-potential and absorbs at about 562 nm, and heme 2 (or BH or b566) is high-potential and absorbs at about 566 nm.</text>
</comment>
<comment type="similarity">
    <text evidence="3 4">Belongs to the cytochrome b family.</text>
</comment>
<comment type="caution">
    <text evidence="2">The full-length protein contains only eight transmembrane helices, not nine as predicted by bioinformatics tools.</text>
</comment>
<reference key="1">
    <citation type="journal article" date="2004" name="J. Mammal.">
        <title>Molecular systematics of the fishing bat Myotis (Pizonyx) vivesi.</title>
        <authorList>
            <person name="Stadelmann B.Y."/>
            <person name="Herrera L.G."/>
            <person name="Arroyo-Cabrales J."/>
            <person name="Flores-Martinez J.J."/>
            <person name="May B.P."/>
            <person name="Ruedi M."/>
        </authorList>
    </citation>
    <scope>NUCLEOTIDE SEQUENCE [GENOMIC DNA]</scope>
</reference>
<reference key="2">
    <citation type="submission" date="2005-04" db="EMBL/GenBank/DDBJ databases">
        <authorList>
            <person name="Stadelmann B.Y."/>
        </authorList>
    </citation>
    <scope>SEQUENCE REVISION</scope>
</reference>
<dbReference type="EMBL" id="AJ504450">
    <property type="protein sequence ID" value="CAD43208.2"/>
    <property type="molecule type" value="Genomic_DNA"/>
</dbReference>
<dbReference type="SMR" id="Q7YD73"/>
<dbReference type="GO" id="GO:0005743">
    <property type="term" value="C:mitochondrial inner membrane"/>
    <property type="evidence" value="ECO:0007669"/>
    <property type="project" value="UniProtKB-SubCell"/>
</dbReference>
<dbReference type="GO" id="GO:0045275">
    <property type="term" value="C:respiratory chain complex III"/>
    <property type="evidence" value="ECO:0007669"/>
    <property type="project" value="InterPro"/>
</dbReference>
<dbReference type="GO" id="GO:0046872">
    <property type="term" value="F:metal ion binding"/>
    <property type="evidence" value="ECO:0007669"/>
    <property type="project" value="UniProtKB-KW"/>
</dbReference>
<dbReference type="GO" id="GO:0008121">
    <property type="term" value="F:ubiquinol-cytochrome-c reductase activity"/>
    <property type="evidence" value="ECO:0007669"/>
    <property type="project" value="InterPro"/>
</dbReference>
<dbReference type="GO" id="GO:0006122">
    <property type="term" value="P:mitochondrial electron transport, ubiquinol to cytochrome c"/>
    <property type="evidence" value="ECO:0007669"/>
    <property type="project" value="TreeGrafter"/>
</dbReference>
<dbReference type="CDD" id="cd00290">
    <property type="entry name" value="cytochrome_b_C"/>
    <property type="match status" value="1"/>
</dbReference>
<dbReference type="CDD" id="cd00284">
    <property type="entry name" value="Cytochrome_b_N"/>
    <property type="match status" value="1"/>
</dbReference>
<dbReference type="FunFam" id="1.20.810.10:FF:000002">
    <property type="entry name" value="Cytochrome b"/>
    <property type="match status" value="1"/>
</dbReference>
<dbReference type="Gene3D" id="1.20.810.10">
    <property type="entry name" value="Cytochrome Bc1 Complex, Chain C"/>
    <property type="match status" value="1"/>
</dbReference>
<dbReference type="InterPro" id="IPR005798">
    <property type="entry name" value="Cyt_b/b6_C"/>
</dbReference>
<dbReference type="InterPro" id="IPR036150">
    <property type="entry name" value="Cyt_b/b6_C_sf"/>
</dbReference>
<dbReference type="InterPro" id="IPR005797">
    <property type="entry name" value="Cyt_b/b6_N"/>
</dbReference>
<dbReference type="InterPro" id="IPR027387">
    <property type="entry name" value="Cytb/b6-like_sf"/>
</dbReference>
<dbReference type="InterPro" id="IPR030689">
    <property type="entry name" value="Cytochrome_b"/>
</dbReference>
<dbReference type="InterPro" id="IPR048260">
    <property type="entry name" value="Cytochrome_b_C_euk/bac"/>
</dbReference>
<dbReference type="InterPro" id="IPR048259">
    <property type="entry name" value="Cytochrome_b_N_euk/bac"/>
</dbReference>
<dbReference type="InterPro" id="IPR016174">
    <property type="entry name" value="Di-haem_cyt_TM"/>
</dbReference>
<dbReference type="PANTHER" id="PTHR19271">
    <property type="entry name" value="CYTOCHROME B"/>
    <property type="match status" value="1"/>
</dbReference>
<dbReference type="PANTHER" id="PTHR19271:SF16">
    <property type="entry name" value="CYTOCHROME B"/>
    <property type="match status" value="1"/>
</dbReference>
<dbReference type="Pfam" id="PF00032">
    <property type="entry name" value="Cytochrom_B_C"/>
    <property type="match status" value="1"/>
</dbReference>
<dbReference type="Pfam" id="PF00033">
    <property type="entry name" value="Cytochrome_B"/>
    <property type="match status" value="1"/>
</dbReference>
<dbReference type="PIRSF" id="PIRSF038885">
    <property type="entry name" value="COB"/>
    <property type="match status" value="1"/>
</dbReference>
<dbReference type="SUPFAM" id="SSF81648">
    <property type="entry name" value="a domain/subunit of cytochrome bc1 complex (Ubiquinol-cytochrome c reductase)"/>
    <property type="match status" value="1"/>
</dbReference>
<dbReference type="SUPFAM" id="SSF81342">
    <property type="entry name" value="Transmembrane di-heme cytochromes"/>
    <property type="match status" value="1"/>
</dbReference>
<dbReference type="PROSITE" id="PS51003">
    <property type="entry name" value="CYTB_CTER"/>
    <property type="match status" value="1"/>
</dbReference>
<dbReference type="PROSITE" id="PS51002">
    <property type="entry name" value="CYTB_NTER"/>
    <property type="match status" value="1"/>
</dbReference>
<sequence length="367" mass="41670">MTNIRKSHPLIKIINNSFIDLPAPSNISSWWNFGSLLGICLALQILTGLFLAMHYTSDTATAFNSVSHMCREVNYGWVLRYMHANGASMFFICLYLHIGRGLYYGSYMFKETWNMGVILLFAVMATAFMGYVLPWGQMSFWGATVITNLLSAIPYIGANLVEWIWGGFSVDKATLTRFFAFHFLLPFIISALVMVHLLFLHETGSNNPTGIPSNMDMIPFHPYYTIKDILGFFMMMLILLCLVLFSPDMLGDPDNYMPANPLNTPPHIKPEWYFLFAYAILRSIPNKLGGVLALVLSILILIIIPFLHTSKQRSMTFRPFSQCLFWLLVADLLTLTWIGGQPVEHPYIIIGQLASILYFMIIIVIMP</sequence>
<accession>Q7YD73</accession>
<keyword id="KW-0249">Electron transport</keyword>
<keyword id="KW-0349">Heme</keyword>
<keyword id="KW-0408">Iron</keyword>
<keyword id="KW-0472">Membrane</keyword>
<keyword id="KW-0479">Metal-binding</keyword>
<keyword id="KW-0496">Mitochondrion</keyword>
<keyword id="KW-0999">Mitochondrion inner membrane</keyword>
<keyword id="KW-0679">Respiratory chain</keyword>
<keyword id="KW-0812">Transmembrane</keyword>
<keyword id="KW-1133">Transmembrane helix</keyword>
<keyword id="KW-0813">Transport</keyword>
<keyword id="KW-0830">Ubiquinone</keyword>
<protein>
    <recommendedName>
        <fullName>Cytochrome b</fullName>
    </recommendedName>
    <alternativeName>
        <fullName>Complex III subunit 3</fullName>
    </alternativeName>
    <alternativeName>
        <fullName>Complex III subunit III</fullName>
    </alternativeName>
    <alternativeName>
        <fullName>Cytochrome b-c1 complex subunit 3</fullName>
    </alternativeName>
    <alternativeName>
        <fullName>Ubiquinol-cytochrome-c reductase complex cytochrome b subunit</fullName>
    </alternativeName>
</protein>
<geneLocation type="mitochondrion"/>
<gene>
    <name type="primary">MT-CYB</name>
    <name type="synonym">COB</name>
    <name type="synonym">CYTB</name>
    <name type="synonym">MTCYB</name>
</gene>
<feature type="chain" id="PRO_0000061056" description="Cytochrome b">
    <location>
        <begin position="1"/>
        <end position="367" status="greater than"/>
    </location>
</feature>
<feature type="transmembrane region" description="Helical" evidence="2">
    <location>
        <begin position="33"/>
        <end position="53"/>
    </location>
</feature>
<feature type="transmembrane region" description="Helical" evidence="2">
    <location>
        <begin position="77"/>
        <end position="98"/>
    </location>
</feature>
<feature type="transmembrane region" description="Helical" evidence="2">
    <location>
        <begin position="113"/>
        <end position="133"/>
    </location>
</feature>
<feature type="transmembrane region" description="Helical" evidence="2">
    <location>
        <begin position="178"/>
        <end position="198"/>
    </location>
</feature>
<feature type="transmembrane region" description="Helical" evidence="2">
    <location>
        <begin position="226"/>
        <end position="246"/>
    </location>
</feature>
<feature type="transmembrane region" description="Helical" evidence="2">
    <location>
        <begin position="288"/>
        <end position="308"/>
    </location>
</feature>
<feature type="transmembrane region" description="Helical" evidence="2">
    <location>
        <begin position="320"/>
        <end position="340"/>
    </location>
</feature>
<feature type="transmembrane region" description="Helical" evidence="2">
    <location>
        <begin position="347"/>
        <end position="367"/>
    </location>
</feature>
<feature type="binding site" description="axial binding residue" evidence="2">
    <location>
        <position position="83"/>
    </location>
    <ligand>
        <name>heme b</name>
        <dbReference type="ChEBI" id="CHEBI:60344"/>
        <label>b562</label>
    </ligand>
    <ligandPart>
        <name>Fe</name>
        <dbReference type="ChEBI" id="CHEBI:18248"/>
    </ligandPart>
</feature>
<feature type="binding site" description="axial binding residue" evidence="2">
    <location>
        <position position="97"/>
    </location>
    <ligand>
        <name>heme b</name>
        <dbReference type="ChEBI" id="CHEBI:60344"/>
        <label>b566</label>
    </ligand>
    <ligandPart>
        <name>Fe</name>
        <dbReference type="ChEBI" id="CHEBI:18248"/>
    </ligandPart>
</feature>
<feature type="binding site" description="axial binding residue" evidence="2">
    <location>
        <position position="182"/>
    </location>
    <ligand>
        <name>heme b</name>
        <dbReference type="ChEBI" id="CHEBI:60344"/>
        <label>b562</label>
    </ligand>
    <ligandPart>
        <name>Fe</name>
        <dbReference type="ChEBI" id="CHEBI:18248"/>
    </ligandPart>
</feature>
<feature type="binding site" description="axial binding residue" evidence="2">
    <location>
        <position position="196"/>
    </location>
    <ligand>
        <name>heme b</name>
        <dbReference type="ChEBI" id="CHEBI:60344"/>
        <label>b566</label>
    </ligand>
    <ligandPart>
        <name>Fe</name>
        <dbReference type="ChEBI" id="CHEBI:18248"/>
    </ligandPart>
</feature>
<feature type="binding site" evidence="2">
    <location>
        <position position="201"/>
    </location>
    <ligand>
        <name>a ubiquinone</name>
        <dbReference type="ChEBI" id="CHEBI:16389"/>
    </ligand>
</feature>
<feature type="non-terminal residue">
    <location>
        <position position="367"/>
    </location>
</feature>
<evidence type="ECO:0000250" key="1"/>
<evidence type="ECO:0000250" key="2">
    <source>
        <dbReference type="UniProtKB" id="P00157"/>
    </source>
</evidence>
<evidence type="ECO:0000255" key="3">
    <source>
        <dbReference type="PROSITE-ProRule" id="PRU00967"/>
    </source>
</evidence>
<evidence type="ECO:0000255" key="4">
    <source>
        <dbReference type="PROSITE-ProRule" id="PRU00968"/>
    </source>
</evidence>
<organism>
    <name type="scientific">Hypsugo savii</name>
    <name type="common">Savi's pipistrelle</name>
    <name type="synonym">Pipistrellus savii</name>
    <dbReference type="NCBI Taxonomy" id="109485"/>
    <lineage>
        <taxon>Eukaryota</taxon>
        <taxon>Metazoa</taxon>
        <taxon>Chordata</taxon>
        <taxon>Craniata</taxon>
        <taxon>Vertebrata</taxon>
        <taxon>Euteleostomi</taxon>
        <taxon>Mammalia</taxon>
        <taxon>Eutheria</taxon>
        <taxon>Laurasiatheria</taxon>
        <taxon>Chiroptera</taxon>
        <taxon>Yangochiroptera</taxon>
        <taxon>Vespertilionidae</taxon>
        <taxon>Hypsugo</taxon>
    </lineage>
</organism>
<proteinExistence type="inferred from homology"/>
<name>CYB_HYPSA</name>